<evidence type="ECO:0000250" key="1"/>
<evidence type="ECO:0000255" key="2"/>
<evidence type="ECO:0000255" key="3">
    <source>
        <dbReference type="PROSITE-ProRule" id="PRU00135"/>
    </source>
</evidence>
<evidence type="ECO:0000255" key="4">
    <source>
        <dbReference type="PROSITE-ProRule" id="PRU00168"/>
    </source>
</evidence>
<evidence type="ECO:0000255" key="5">
    <source>
        <dbReference type="PROSITE-ProRule" id="PRU00579"/>
    </source>
</evidence>
<evidence type="ECO:0000256" key="6">
    <source>
        <dbReference type="SAM" id="MobiDB-lite"/>
    </source>
</evidence>
<evidence type="ECO:0000269" key="7">
    <source>
    </source>
</evidence>
<evidence type="ECO:0000305" key="8"/>
<accession>Q55FD8</accession>
<comment type="function">
    <text evidence="1">Promotes the exchange of Ras-bound GDP by GTP.</text>
</comment>
<comment type="subcellular location">
    <subcellularLocation>
        <location evidence="8">Membrane</location>
        <topology evidence="8">Single-pass type I membrane protein</topology>
    </subcellularLocation>
</comment>
<comment type="developmental stage">
    <text evidence="7">Expressed during development; with a peak at 12 hours of development.</text>
</comment>
<sequence>MGNINSICLNNNGKYRIDSISCSLEGCKLNSKELVENMVALVDKYPLTQLLIIRECKLKQIPVNITNLSNLSELILSDNKLSQLPWSLPPPFKPNTLLSMASITNENLVRLDLSNNRFTEFPSSVFVLPNLKQLILCNNQLTNMNVTLCGGTSNNNGAHQPHIACQLEELKLSNNNFTIFPSIIGDQLTTLKSLDLSGNTITSLPNSFSNLVSLTSLNLKSNKFTCFPPSLCTLDKLVHLNLSCNQILVSPSDHTLGVSLLPSLEKLELQHNRFAHFPMDILEIVSLRVLKLQDNDIDKIPDKIGNLLNLNELFLSENKITQLPSTIGELINLRKLYLEYNKIGSLPQEFSKLSKLNILILHNNDLKFVPDQLHSLSQLLRLSLDENQLSSSDQKLIKSEGSLALIKRKNKLNYGSTMNGTGTTSSSGSASTSTHGSINKTTDILLSSVTLNNSILNQINNNNNNNNNNNNNNNNNNNSSNNNSGTNSLSSTPNGTGKSKKKLTHLTISRSLFRGNSSNLESEKEDFINKKQQQQQQQQQQQQQQQQQQQQQQQQQQQQQQQQQQLGSTASPSTASPITSHITVNSTVLDFEDDIQKMQLGLEALSNLETSIGSNNSGGGDSMNGSGGNINNSGGSGSGCGTISGSTTKQRRGSVFLPPTNAFKLSPNVVSSSYNTLPASVMSGLLQQQNLENGGVGSGSGSGSPIISANSICNSNSSSSNSLLKPPIINTTNLSTSPNLLSQSSTSFLNLPPLNQSSTNSFLPPQHQHHHHHSNLSQSLSINNLAHRLPTSLSSSSLSSNNTYDSLQFQQQQQHHHHNHNNHQNSNQPLATIVPSFSKFKNSFDQLLEEQDFSKKKRETLQKLSKEQKWNLLLQYRNSTLNMLNMKEHSNNSNNNQSIKNSTIIASTTTTTTTNGESLDGSSIQQQITKNSNFQSSRFYIDNLTSKTDISLVKEVHDFLKESGPEVSIFIGMGGIESLLGILQFNLDNAQLQFDEEKVGYCLLCLKILVECTAKSVITTNNSLNLVTMFLTSASKYIIDIIIDIYDELLRLQVIGVSVVLDSLINFQKVKGLSSPYVPLVALLRNPIIEMPTKTTVFKIINFLIYSFSVLEERFSVICSLLKVGILEVIGMFRALPHTSYSLRFELDLFEEVLDSDESELVKKIGRKEVLKRMSNEDNDLSKQSSKQSMDFVRVVMVSAGYGDLKIDLDERTSYANVIDFIQSNYQIKYSIDRYGLFVPAIGSLVLDGSILQSSGSQSRWVDPSKSLIDNGLSNEIVEFKMKPMQIQVLQSVVVVVATNHQKEDIIKEFTIDPQLKCFEIVQYLRTRLDSSSPAFQRKISVLTEDEDEDYESDIYGVYCFSSLESYDQGSWYPLNSRFLDFNPTNTPTIIDVKLMERPLRVLFSGTEKLMKFNPYVPVSELIKEIKNEIHLKINIEDYGISYVPNVSSSNLSSLIIEETWLDPTKTLLDHNDMKCSVVQFKFKPRTVSVMVLVESGIEIPTTDTPYQFVNTNSISEIIEKICTPHQLNPLSHSLYISDCQGQKIKLLSRQNCLRDQQVNNGDHLIITSKQKDLPSDFNVWDEPNDSSETITYSKDRRVSSVTLNKLIEKLTSPEYTQDSEMKTIFLSSYRSIITPSVLLSKLMERHTIPTLVDKERGKLIQRKTRLLIKSWLELETTKNREEVITLLVQNMPAQSIEDDGLKELTELFVDLSTKSYSSILPIVIGELPKCKIPKIIDSYVTFADMDEIEIARQLSLLTFPLYSRIETSELLNQRWSKPGGGPNIMSVVGLFNKISNWVSFTIVNQPKLRDRAVVYGKMVKIANAFYELRNYHLLMAIISGLNASPVLRLKYTKGKLSKNLKDNLDTLEELMSTQSSMKNYRADLAAASPPAIPFMGFHLSDLVFIDEGNQQLCDSRINFKKLEMYKKTIATLQNFSLFPYQFTPVPIIQNYFLDYKIVADKPIYEMSLSAEPRNAERYDIQ</sequence>
<keyword id="KW-0175">Coiled coil</keyword>
<keyword id="KW-0344">Guanine-nucleotide releasing factor</keyword>
<keyword id="KW-0433">Leucine-rich repeat</keyword>
<keyword id="KW-0472">Membrane</keyword>
<keyword id="KW-1185">Reference proteome</keyword>
<keyword id="KW-0677">Repeat</keyword>
<keyword id="KW-0812">Transmembrane</keyword>
<keyword id="KW-1133">Transmembrane helix</keyword>
<gene>
    <name type="primary">gefV</name>
    <name type="synonym">rasGEFV</name>
    <name type="ORF">DDB_G0268578</name>
</gene>
<feature type="chain" id="PRO_0000384478" description="Ras guanine nucleotide exchange factor V">
    <location>
        <begin position="1"/>
        <end position="1982"/>
    </location>
</feature>
<feature type="topological domain" description="Extracellular" evidence="2">
    <location>
        <begin position="1"/>
        <end position="1831"/>
    </location>
</feature>
<feature type="transmembrane region" description="Helical" evidence="2">
    <location>
        <begin position="1832"/>
        <end position="1848"/>
    </location>
</feature>
<feature type="topological domain" description="Cytoplasmic" evidence="2">
    <location>
        <begin position="1849"/>
        <end position="1982"/>
    </location>
</feature>
<feature type="repeat" description="LRR 1">
    <location>
        <begin position="1"/>
        <end position="26"/>
    </location>
</feature>
<feature type="repeat" description="LRR 2">
    <location>
        <begin position="47"/>
        <end position="68"/>
    </location>
</feature>
<feature type="repeat" description="LRR 3">
    <location>
        <begin position="69"/>
        <end position="94"/>
    </location>
</feature>
<feature type="repeat" description="LRR 4">
    <location>
        <begin position="105"/>
        <end position="128"/>
    </location>
</feature>
<feature type="repeat" description="LRR 5">
    <location>
        <begin position="130"/>
        <end position="151"/>
    </location>
</feature>
<feature type="repeat" description="LRR 6">
    <location>
        <begin position="164"/>
        <end position="187"/>
    </location>
</feature>
<feature type="repeat" description="LRR 7">
    <location>
        <begin position="188"/>
        <end position="210"/>
    </location>
</feature>
<feature type="repeat" description="LRR 8">
    <location>
        <begin position="212"/>
        <end position="234"/>
    </location>
</feature>
<feature type="repeat" description="LRR 9">
    <location>
        <begin position="236"/>
        <end position="257"/>
    </location>
</feature>
<feature type="repeat" description="LRR 10">
    <location>
        <begin position="261"/>
        <end position="284"/>
    </location>
</feature>
<feature type="repeat" description="LRR 11">
    <location>
        <begin position="286"/>
        <end position="307"/>
    </location>
</feature>
<feature type="repeat" description="LRR 12">
    <location>
        <begin position="308"/>
        <end position="330"/>
    </location>
</feature>
<feature type="repeat" description="LRR 13">
    <location>
        <begin position="331"/>
        <end position="352"/>
    </location>
</feature>
<feature type="repeat" description="LRR 14">
    <location>
        <begin position="354"/>
        <end position="376"/>
    </location>
</feature>
<feature type="repeat" description="LRR 15">
    <location>
        <begin position="378"/>
        <end position="399"/>
    </location>
</feature>
<feature type="repeat" description="LRR 16">
    <location>
        <begin position="443"/>
        <end position="466"/>
    </location>
</feature>
<feature type="repeat" description="LRR 17">
    <location>
        <begin position="592"/>
        <end position="615"/>
    </location>
</feature>
<feature type="repeat" description="LRR 18">
    <location>
        <begin position="657"/>
        <end position="684"/>
    </location>
</feature>
<feature type="repeat" description="LRR 19">
    <location>
        <begin position="773"/>
        <end position="796"/>
    </location>
</feature>
<feature type="domain" description="GBD/FH3" evidence="5">
    <location>
        <begin position="832"/>
        <end position="1236"/>
    </location>
</feature>
<feature type="repeat" description="LRR 20">
    <location>
        <begin position="979"/>
        <end position="1003"/>
    </location>
</feature>
<feature type="repeat" description="LRR 21">
    <location>
        <begin position="1075"/>
        <end position="1100"/>
    </location>
</feature>
<feature type="repeat" description="LRR 22">
    <location>
        <begin position="1239"/>
        <end position="1263"/>
    </location>
</feature>
<feature type="domain" description="N-terminal Ras-GEF" evidence="3">
    <location>
        <begin position="1595"/>
        <end position="1717"/>
    </location>
</feature>
<feature type="repeat" description="LRR 23">
    <location>
        <begin position="1689"/>
        <end position="1712"/>
    </location>
</feature>
<feature type="domain" description="Ras-GEF" evidence="4">
    <location>
        <begin position="1747"/>
        <end position="1974"/>
    </location>
</feature>
<feature type="repeat" description="LRR 24">
    <location>
        <begin position="1865"/>
        <end position="1888"/>
    </location>
</feature>
<feature type="repeat" description="LRR 25">
    <location>
        <begin position="1917"/>
        <end position="1941"/>
    </location>
</feature>
<feature type="region of interest" description="Disordered" evidence="6">
    <location>
        <begin position="414"/>
        <end position="436"/>
    </location>
</feature>
<feature type="region of interest" description="Disordered" evidence="6">
    <location>
        <begin position="457"/>
        <end position="532"/>
    </location>
</feature>
<feature type="region of interest" description="Disordered" evidence="6">
    <location>
        <begin position="615"/>
        <end position="654"/>
    </location>
</feature>
<feature type="region of interest" description="Disordered" evidence="6">
    <location>
        <begin position="756"/>
        <end position="778"/>
    </location>
</feature>
<feature type="region of interest" description="Disordered" evidence="6">
    <location>
        <begin position="807"/>
        <end position="829"/>
    </location>
</feature>
<feature type="coiled-coil region" evidence="2">
    <location>
        <begin position="515"/>
        <end position="567"/>
    </location>
</feature>
<feature type="compositionally biased region" description="Low complexity" evidence="6">
    <location>
        <begin position="415"/>
        <end position="436"/>
    </location>
</feature>
<feature type="compositionally biased region" description="Low complexity" evidence="6">
    <location>
        <begin position="457"/>
        <end position="495"/>
    </location>
</feature>
<feature type="compositionally biased region" description="Polar residues" evidence="6">
    <location>
        <begin position="506"/>
        <end position="520"/>
    </location>
</feature>
<feature type="compositionally biased region" description="Gly residues" evidence="6">
    <location>
        <begin position="616"/>
        <end position="642"/>
    </location>
</feature>
<protein>
    <recommendedName>
        <fullName>Ras guanine nucleotide exchange factor V</fullName>
    </recommendedName>
    <alternativeName>
        <fullName>RasGEF domain-containing protein V</fullName>
    </alternativeName>
</protein>
<reference key="1">
    <citation type="journal article" date="2005" name="Nature">
        <title>The genome of the social amoeba Dictyostelium discoideum.</title>
        <authorList>
            <person name="Eichinger L."/>
            <person name="Pachebat J.A."/>
            <person name="Gloeckner G."/>
            <person name="Rajandream M.A."/>
            <person name="Sucgang R."/>
            <person name="Berriman M."/>
            <person name="Song J."/>
            <person name="Olsen R."/>
            <person name="Szafranski K."/>
            <person name="Xu Q."/>
            <person name="Tunggal B."/>
            <person name="Kummerfeld S."/>
            <person name="Madera M."/>
            <person name="Konfortov B.A."/>
            <person name="Rivero F."/>
            <person name="Bankier A.T."/>
            <person name="Lehmann R."/>
            <person name="Hamlin N."/>
            <person name="Davies R."/>
            <person name="Gaudet P."/>
            <person name="Fey P."/>
            <person name="Pilcher K."/>
            <person name="Chen G."/>
            <person name="Saunders D."/>
            <person name="Sodergren E.J."/>
            <person name="Davis P."/>
            <person name="Kerhornou A."/>
            <person name="Nie X."/>
            <person name="Hall N."/>
            <person name="Anjard C."/>
            <person name="Hemphill L."/>
            <person name="Bason N."/>
            <person name="Farbrother P."/>
            <person name="Desany B."/>
            <person name="Just E."/>
            <person name="Morio T."/>
            <person name="Rost R."/>
            <person name="Churcher C.M."/>
            <person name="Cooper J."/>
            <person name="Haydock S."/>
            <person name="van Driessche N."/>
            <person name="Cronin A."/>
            <person name="Goodhead I."/>
            <person name="Muzny D.M."/>
            <person name="Mourier T."/>
            <person name="Pain A."/>
            <person name="Lu M."/>
            <person name="Harper D."/>
            <person name="Lindsay R."/>
            <person name="Hauser H."/>
            <person name="James K.D."/>
            <person name="Quiles M."/>
            <person name="Madan Babu M."/>
            <person name="Saito T."/>
            <person name="Buchrieser C."/>
            <person name="Wardroper A."/>
            <person name="Felder M."/>
            <person name="Thangavelu M."/>
            <person name="Johnson D."/>
            <person name="Knights A."/>
            <person name="Loulseged H."/>
            <person name="Mungall K.L."/>
            <person name="Oliver K."/>
            <person name="Price C."/>
            <person name="Quail M.A."/>
            <person name="Urushihara H."/>
            <person name="Hernandez J."/>
            <person name="Rabbinowitsch E."/>
            <person name="Steffen D."/>
            <person name="Sanders M."/>
            <person name="Ma J."/>
            <person name="Kohara Y."/>
            <person name="Sharp S."/>
            <person name="Simmonds M.N."/>
            <person name="Spiegler S."/>
            <person name="Tivey A."/>
            <person name="Sugano S."/>
            <person name="White B."/>
            <person name="Walker D."/>
            <person name="Woodward J.R."/>
            <person name="Winckler T."/>
            <person name="Tanaka Y."/>
            <person name="Shaulsky G."/>
            <person name="Schleicher M."/>
            <person name="Weinstock G.M."/>
            <person name="Rosenthal A."/>
            <person name="Cox E.C."/>
            <person name="Chisholm R.L."/>
            <person name="Gibbs R.A."/>
            <person name="Loomis W.F."/>
            <person name="Platzer M."/>
            <person name="Kay R.R."/>
            <person name="Williams J.G."/>
            <person name="Dear P.H."/>
            <person name="Noegel A.A."/>
            <person name="Barrell B.G."/>
            <person name="Kuspa A."/>
        </authorList>
    </citation>
    <scope>NUCLEOTIDE SEQUENCE [LARGE SCALE GENOMIC DNA]</scope>
    <source>
        <strain>AX4</strain>
    </source>
</reference>
<reference key="2">
    <citation type="journal article" date="2005" name="Genome Biol.">
        <title>The Dictyostelium genome encodes numerous RasGEFs with multiple biological roles.</title>
        <authorList>
            <person name="Wilkins A."/>
            <person name="Szafranski K."/>
            <person name="Fraser D.J."/>
            <person name="Bakthavatsalam D."/>
            <person name="Mueller R."/>
            <person name="Fisher P.R."/>
            <person name="Gloeckner G."/>
            <person name="Eichinger L."/>
            <person name="Noegel A.A."/>
            <person name="Insall R.H."/>
        </authorList>
    </citation>
    <scope>DEVELOPMENTAL STAGE</scope>
    <source>
        <strain>AX4</strain>
    </source>
</reference>
<organism>
    <name type="scientific">Dictyostelium discoideum</name>
    <name type="common">Social amoeba</name>
    <dbReference type="NCBI Taxonomy" id="44689"/>
    <lineage>
        <taxon>Eukaryota</taxon>
        <taxon>Amoebozoa</taxon>
        <taxon>Evosea</taxon>
        <taxon>Eumycetozoa</taxon>
        <taxon>Dictyostelia</taxon>
        <taxon>Dictyosteliales</taxon>
        <taxon>Dictyosteliaceae</taxon>
        <taxon>Dictyostelium</taxon>
    </lineage>
</organism>
<name>GEFV_DICDI</name>
<proteinExistence type="evidence at transcript level"/>
<dbReference type="EMBL" id="AAFI02000003">
    <property type="protein sequence ID" value="EAL73742.1"/>
    <property type="molecule type" value="Genomic_DNA"/>
</dbReference>
<dbReference type="RefSeq" id="XP_647595.1">
    <property type="nucleotide sequence ID" value="XM_642503.1"/>
</dbReference>
<dbReference type="SMR" id="Q55FD8"/>
<dbReference type="FunCoup" id="Q55FD8">
    <property type="interactions" value="7"/>
</dbReference>
<dbReference type="STRING" id="44689.Q55FD8"/>
<dbReference type="PaxDb" id="44689-DDB0231998"/>
<dbReference type="EnsemblProtists" id="EAL73742">
    <property type="protein sequence ID" value="EAL73742"/>
    <property type="gene ID" value="DDB_G0268578"/>
</dbReference>
<dbReference type="GeneID" id="8616407"/>
<dbReference type="KEGG" id="ddi:DDB_G0268578"/>
<dbReference type="dictyBase" id="DDB_G0268578">
    <property type="gene designation" value="gefV"/>
</dbReference>
<dbReference type="VEuPathDB" id="AmoebaDB:DDB_G0268578"/>
<dbReference type="eggNOG" id="KOG0619">
    <property type="taxonomic scope" value="Eukaryota"/>
</dbReference>
<dbReference type="eggNOG" id="KOG3417">
    <property type="taxonomic scope" value="Eukaryota"/>
</dbReference>
<dbReference type="HOGENOM" id="CLU_229636_0_0_1"/>
<dbReference type="InParanoid" id="Q55FD8"/>
<dbReference type="OMA" id="EIVEFKM"/>
<dbReference type="Reactome" id="R-DDI-193648">
    <property type="pathway name" value="NRAGE signals death through JNK"/>
</dbReference>
<dbReference type="Reactome" id="R-DDI-9013148">
    <property type="pathway name" value="CDC42 GTPase cycle"/>
</dbReference>
<dbReference type="Reactome" id="R-DDI-9013149">
    <property type="pathway name" value="RAC1 GTPase cycle"/>
</dbReference>
<dbReference type="PRO" id="PR:Q55FD8"/>
<dbReference type="Proteomes" id="UP000002195">
    <property type="component" value="Chromosome 1"/>
</dbReference>
<dbReference type="GO" id="GO:0005886">
    <property type="term" value="C:plasma membrane"/>
    <property type="evidence" value="ECO:0000318"/>
    <property type="project" value="GO_Central"/>
</dbReference>
<dbReference type="GO" id="GO:0003779">
    <property type="term" value="F:actin binding"/>
    <property type="evidence" value="ECO:0007669"/>
    <property type="project" value="InterPro"/>
</dbReference>
<dbReference type="GO" id="GO:0005085">
    <property type="term" value="F:guanyl-nucleotide exchange factor activity"/>
    <property type="evidence" value="ECO:0000318"/>
    <property type="project" value="GO_Central"/>
</dbReference>
<dbReference type="GO" id="GO:0031267">
    <property type="term" value="F:small GTPase binding"/>
    <property type="evidence" value="ECO:0007669"/>
    <property type="project" value="InterPro"/>
</dbReference>
<dbReference type="GO" id="GO:0030036">
    <property type="term" value="P:actin cytoskeleton organization"/>
    <property type="evidence" value="ECO:0007669"/>
    <property type="project" value="InterPro"/>
</dbReference>
<dbReference type="GO" id="GO:0007265">
    <property type="term" value="P:Ras protein signal transduction"/>
    <property type="evidence" value="ECO:0000318"/>
    <property type="project" value="GO_Central"/>
</dbReference>
<dbReference type="GO" id="GO:0030587">
    <property type="term" value="P:sorocarp development"/>
    <property type="evidence" value="ECO:0007001"/>
    <property type="project" value="dictyBase"/>
</dbReference>
<dbReference type="CDD" id="cd00155">
    <property type="entry name" value="RasGEF"/>
    <property type="match status" value="1"/>
</dbReference>
<dbReference type="CDD" id="cd06224">
    <property type="entry name" value="REM"/>
    <property type="match status" value="1"/>
</dbReference>
<dbReference type="FunFam" id="3.80.10.10:FF:002496">
    <property type="entry name" value="Ras guanine nucleotide exchange factor V"/>
    <property type="match status" value="1"/>
</dbReference>
<dbReference type="FunFam" id="3.80.10.10:FF:002832">
    <property type="entry name" value="Ras guanine nucleotide exchange factor V"/>
    <property type="match status" value="1"/>
</dbReference>
<dbReference type="Gene3D" id="1.25.10.10">
    <property type="entry name" value="Leucine-rich Repeat Variant"/>
    <property type="match status" value="1"/>
</dbReference>
<dbReference type="Gene3D" id="1.10.840.10">
    <property type="entry name" value="Ras guanine-nucleotide exchange factors catalytic domain"/>
    <property type="match status" value="1"/>
</dbReference>
<dbReference type="Gene3D" id="3.80.10.10">
    <property type="entry name" value="Ribonuclease Inhibitor"/>
    <property type="match status" value="3"/>
</dbReference>
<dbReference type="Gene3D" id="1.20.870.10">
    <property type="entry name" value="Son of sevenless (SoS) protein Chain: S domain 1"/>
    <property type="match status" value="1"/>
</dbReference>
<dbReference type="InterPro" id="IPR011989">
    <property type="entry name" value="ARM-like"/>
</dbReference>
<dbReference type="InterPro" id="IPR016024">
    <property type="entry name" value="ARM-type_fold"/>
</dbReference>
<dbReference type="InterPro" id="IPR014768">
    <property type="entry name" value="GBD/FH3_dom"/>
</dbReference>
<dbReference type="InterPro" id="IPR010473">
    <property type="entry name" value="GTPase-bd"/>
</dbReference>
<dbReference type="InterPro" id="IPR001611">
    <property type="entry name" value="Leu-rich_rpt"/>
</dbReference>
<dbReference type="InterPro" id="IPR003591">
    <property type="entry name" value="Leu-rich_rpt_typical-subtyp"/>
</dbReference>
<dbReference type="InterPro" id="IPR032675">
    <property type="entry name" value="LRR_dom_sf"/>
</dbReference>
<dbReference type="InterPro" id="IPR055414">
    <property type="entry name" value="LRR_R13L4/SHOC2-like"/>
</dbReference>
<dbReference type="InterPro" id="IPR008937">
    <property type="entry name" value="Ras-like_GEF"/>
</dbReference>
<dbReference type="InterPro" id="IPR000651">
    <property type="entry name" value="Ras-like_Gua-exchang_fac_N"/>
</dbReference>
<dbReference type="InterPro" id="IPR019804">
    <property type="entry name" value="Ras_G-nucl-exch_fac_CS"/>
</dbReference>
<dbReference type="InterPro" id="IPR023578">
    <property type="entry name" value="Ras_GEF_dom_sf"/>
</dbReference>
<dbReference type="InterPro" id="IPR001895">
    <property type="entry name" value="RASGEF_cat_dom"/>
</dbReference>
<dbReference type="InterPro" id="IPR036964">
    <property type="entry name" value="RASGEF_cat_dom_sf"/>
</dbReference>
<dbReference type="PANTHER" id="PTHR23113">
    <property type="entry name" value="GUANINE NUCLEOTIDE EXCHANGE FACTOR"/>
    <property type="match status" value="1"/>
</dbReference>
<dbReference type="PANTHER" id="PTHR23113:SF184">
    <property type="entry name" value="RAS GUANINE NUCLEOTIDE EXCHANGE FACTOR V"/>
    <property type="match status" value="1"/>
</dbReference>
<dbReference type="Pfam" id="PF06371">
    <property type="entry name" value="Drf_GBD"/>
    <property type="match status" value="1"/>
</dbReference>
<dbReference type="Pfam" id="PF00560">
    <property type="entry name" value="LRR_1"/>
    <property type="match status" value="1"/>
</dbReference>
<dbReference type="Pfam" id="PF23598">
    <property type="entry name" value="LRR_14"/>
    <property type="match status" value="1"/>
</dbReference>
<dbReference type="Pfam" id="PF13855">
    <property type="entry name" value="LRR_8"/>
    <property type="match status" value="1"/>
</dbReference>
<dbReference type="Pfam" id="PF00617">
    <property type="entry name" value="RasGEF"/>
    <property type="match status" value="1"/>
</dbReference>
<dbReference type="Pfam" id="PF00618">
    <property type="entry name" value="RasGEF_N"/>
    <property type="match status" value="1"/>
</dbReference>
<dbReference type="SMART" id="SM01140">
    <property type="entry name" value="Drf_GBD"/>
    <property type="match status" value="1"/>
</dbReference>
<dbReference type="SMART" id="SM00364">
    <property type="entry name" value="LRR_BAC"/>
    <property type="match status" value="8"/>
</dbReference>
<dbReference type="SMART" id="SM00369">
    <property type="entry name" value="LRR_TYP"/>
    <property type="match status" value="12"/>
</dbReference>
<dbReference type="SMART" id="SM00147">
    <property type="entry name" value="RasGEF"/>
    <property type="match status" value="1"/>
</dbReference>
<dbReference type="SMART" id="SM00229">
    <property type="entry name" value="RasGEFN"/>
    <property type="match status" value="1"/>
</dbReference>
<dbReference type="SUPFAM" id="SSF48371">
    <property type="entry name" value="ARM repeat"/>
    <property type="match status" value="1"/>
</dbReference>
<dbReference type="SUPFAM" id="SSF81995">
    <property type="entry name" value="beta-sandwich domain of Sec23/24"/>
    <property type="match status" value="1"/>
</dbReference>
<dbReference type="SUPFAM" id="SSF48366">
    <property type="entry name" value="Ras GEF"/>
    <property type="match status" value="1"/>
</dbReference>
<dbReference type="SUPFAM" id="SSF52047">
    <property type="entry name" value="RNI-like"/>
    <property type="match status" value="1"/>
</dbReference>
<dbReference type="PROSITE" id="PS51232">
    <property type="entry name" value="GBD_FH3"/>
    <property type="match status" value="1"/>
</dbReference>
<dbReference type="PROSITE" id="PS51450">
    <property type="entry name" value="LRR"/>
    <property type="match status" value="13"/>
</dbReference>
<dbReference type="PROSITE" id="PS00720">
    <property type="entry name" value="RASGEF"/>
    <property type="match status" value="1"/>
</dbReference>
<dbReference type="PROSITE" id="PS50009">
    <property type="entry name" value="RASGEF_CAT"/>
    <property type="match status" value="1"/>
</dbReference>
<dbReference type="PROSITE" id="PS50212">
    <property type="entry name" value="RASGEF_NTER"/>
    <property type="match status" value="1"/>
</dbReference>